<organism>
    <name type="scientific">Drosophila virilis</name>
    <name type="common">Fruit fly</name>
    <dbReference type="NCBI Taxonomy" id="7244"/>
    <lineage>
        <taxon>Eukaryota</taxon>
        <taxon>Metazoa</taxon>
        <taxon>Ecdysozoa</taxon>
        <taxon>Arthropoda</taxon>
        <taxon>Hexapoda</taxon>
        <taxon>Insecta</taxon>
        <taxon>Pterygota</taxon>
        <taxon>Neoptera</taxon>
        <taxon>Endopterygota</taxon>
        <taxon>Diptera</taxon>
        <taxon>Brachycera</taxon>
        <taxon>Muscomorpha</taxon>
        <taxon>Ephydroidea</taxon>
        <taxon>Drosophilidae</taxon>
        <taxon>Drosophila</taxon>
    </lineage>
</organism>
<gene>
    <name evidence="1" type="primary">eIF3a</name>
    <name evidence="1" type="synonym">eIF3-S10</name>
    <name type="ORF">GJ10729</name>
</gene>
<feature type="chain" id="PRO_0000366343" description="Eukaryotic translation initiation factor 3 subunit A">
    <location>
        <begin position="1"/>
        <end position="1138"/>
    </location>
</feature>
<feature type="domain" description="PCI" evidence="2">
    <location>
        <begin position="319"/>
        <end position="502"/>
    </location>
</feature>
<feature type="region of interest" description="Disordered" evidence="3">
    <location>
        <begin position="590"/>
        <end position="633"/>
    </location>
</feature>
<feature type="region of interest" description="Disordered" evidence="3">
    <location>
        <begin position="817"/>
        <end position="1138"/>
    </location>
</feature>
<feature type="compositionally biased region" description="Basic and acidic residues" evidence="3">
    <location>
        <begin position="817"/>
        <end position="903"/>
    </location>
</feature>
<feature type="compositionally biased region" description="Basic and acidic residues" evidence="3">
    <location>
        <begin position="923"/>
        <end position="967"/>
    </location>
</feature>
<feature type="compositionally biased region" description="Basic and acidic residues" evidence="3">
    <location>
        <begin position="1003"/>
        <end position="1049"/>
    </location>
</feature>
<feature type="compositionally biased region" description="Basic and acidic residues" evidence="3">
    <location>
        <begin position="1058"/>
        <end position="1078"/>
    </location>
</feature>
<feature type="compositionally biased region" description="Gly residues" evidence="3">
    <location>
        <begin position="1082"/>
        <end position="1100"/>
    </location>
</feature>
<feature type="compositionally biased region" description="Basic and acidic residues" evidence="3">
    <location>
        <begin position="1107"/>
        <end position="1128"/>
    </location>
</feature>
<proteinExistence type="inferred from homology"/>
<evidence type="ECO:0000255" key="1">
    <source>
        <dbReference type="HAMAP-Rule" id="MF_03000"/>
    </source>
</evidence>
<evidence type="ECO:0000255" key="2">
    <source>
        <dbReference type="PROSITE-ProRule" id="PRU01185"/>
    </source>
</evidence>
<evidence type="ECO:0000256" key="3">
    <source>
        <dbReference type="SAM" id="MobiDB-lite"/>
    </source>
</evidence>
<sequence>MARYTQRPENALKRANEFIEVGKPLRALDTLQEVFRNKRWNYAYSETVIEPLMFKYLYLCVELKKSHIAKEGLFQYRNMFQLVNVNSLENVIRGYLKMAEEHTEAAQAQSSAAVAVLELDDLDNIATPESILMSAVCGEDAQDRSDRTILLPWVKFLWESYCQCLELLRVNTHCEALYHDIARMAFQFCLKYNRKSEFRRLCDKLRKHLEDICKSSNQTTGVSINKVETQQLCLDTRLYLLDSAIQMELWQEAYKAIEDIHGLMAMSKKTPVPKTMANYYQKLAMVFSKAGNQLFHAAALLKLFQLTRELKKNLTKDDLQRMAAHVLLATLSIPLPSAHPEFDRFIEADKSPLEKAQKLAVLLGLPQPPTRVSLIREVVRLNVPNLVSDEFRNLYNWLEVDFNPLNLCKRIQSIVDTIESSETENTLLTPYIQSLKDVTIMRLIRQISQVYESIEFKRLLELAPFCNIFELEKLLVESVRHNDMQIRIDHQRNSIYFGTDLTESQREYRPDGPTLQSMPSEQIRSQLVNMSTVLTRAVSIVYPNRERDQRAKLRTQMVQHYHEIKDREHQRILQRQKIIEDRKEFIEKQNNAREEEEARRHEEESRKAKLAEQKRLEQEQEERERKRHENEIQAIKEKSLKEKVQQISQTAHGKKMLSKLDEEGIKKLDAEQIAMRESEELQRERKELQSKLKSQEKKIDYFERAKRIEEIPLFEKYLAEKNVKDKEFWEATEQTRIENAIAERKDAVSQQDRLKRMYPDRDEYLEALKKERASLYVEKLKKFDIALAEERKKRLADRVVRRREERRQAYLRAKEEERFRKEEEIRHAREAEERAAAEARRLEREAEDEKRRQQYEKQRAKEEEAERKIQEDRERLAREVAVERERSEKERDVWRPRADRVERPSAAPAGGASEWRRNAPPTDRNERTDRGDRNDRNDRNDRNDRNDRNDRNDRNDRPERAERKENDGGADSSWRVRREPESQRGTGAGMDRSERGGGGAPSGRDDKWRRGGDRSERLGGDRDRDSFRRNDGPRRDDDRGGFRRDDQPQRETGSNWRDSPRQNDRDNRRTTGERRDVRGAGPKEGGGGVSGGGAGGGGGNWRTAPSPREEKAPPKREQAQDKENKAGDDGEWTSVKRR</sequence>
<accession>B4M693</accession>
<keyword id="KW-0963">Cytoplasm</keyword>
<keyword id="KW-0396">Initiation factor</keyword>
<keyword id="KW-0648">Protein biosynthesis</keyword>
<keyword id="KW-1185">Reference proteome</keyword>
<keyword id="KW-0694">RNA-binding</keyword>
<dbReference type="EMBL" id="CH940652">
    <property type="protein sequence ID" value="EDW59169.1"/>
    <property type="molecule type" value="Genomic_DNA"/>
</dbReference>
<dbReference type="RefSeq" id="XP_002056057.1">
    <property type="nucleotide sequence ID" value="XM_002056021.4"/>
</dbReference>
<dbReference type="SMR" id="B4M693"/>
<dbReference type="FunCoup" id="B4M693">
    <property type="interactions" value="2512"/>
</dbReference>
<dbReference type="STRING" id="7244.B4M693"/>
<dbReference type="EnsemblMetazoa" id="FBtr0226654">
    <property type="protein sequence ID" value="FBpp0225146"/>
    <property type="gene ID" value="FBgn0198006"/>
</dbReference>
<dbReference type="EnsemblMetazoa" id="XM_002056021.3">
    <property type="protein sequence ID" value="XP_002056057.1"/>
    <property type="gene ID" value="LOC6633030"/>
</dbReference>
<dbReference type="GeneID" id="6633030"/>
<dbReference type="KEGG" id="dvi:6633030"/>
<dbReference type="CTD" id="8661"/>
<dbReference type="eggNOG" id="KOG2072">
    <property type="taxonomic scope" value="Eukaryota"/>
</dbReference>
<dbReference type="HOGENOM" id="CLU_002096_2_1_1"/>
<dbReference type="InParanoid" id="B4M693"/>
<dbReference type="OMA" id="EHITNKR"/>
<dbReference type="OrthoDB" id="18884at2759"/>
<dbReference type="PhylomeDB" id="B4M693"/>
<dbReference type="ChiTaRS" id="eIF3-S10">
    <property type="organism name" value="fly"/>
</dbReference>
<dbReference type="Proteomes" id="UP000008792">
    <property type="component" value="Unassembled WGS sequence"/>
</dbReference>
<dbReference type="GO" id="GO:0016282">
    <property type="term" value="C:eukaryotic 43S preinitiation complex"/>
    <property type="evidence" value="ECO:0007669"/>
    <property type="project" value="UniProtKB-UniRule"/>
</dbReference>
<dbReference type="GO" id="GO:0033290">
    <property type="term" value="C:eukaryotic 48S preinitiation complex"/>
    <property type="evidence" value="ECO:0007669"/>
    <property type="project" value="UniProtKB-UniRule"/>
</dbReference>
<dbReference type="GO" id="GO:0005852">
    <property type="term" value="C:eukaryotic translation initiation factor 3 complex"/>
    <property type="evidence" value="ECO:0000250"/>
    <property type="project" value="UniProtKB"/>
</dbReference>
<dbReference type="GO" id="GO:0071540">
    <property type="term" value="C:eukaryotic translation initiation factor 3 complex, eIF3e"/>
    <property type="evidence" value="ECO:0007669"/>
    <property type="project" value="TreeGrafter"/>
</dbReference>
<dbReference type="GO" id="GO:0071541">
    <property type="term" value="C:eukaryotic translation initiation factor 3 complex, eIF3m"/>
    <property type="evidence" value="ECO:0007669"/>
    <property type="project" value="TreeGrafter"/>
</dbReference>
<dbReference type="GO" id="GO:0043614">
    <property type="term" value="C:multi-eIF complex"/>
    <property type="evidence" value="ECO:0007669"/>
    <property type="project" value="TreeGrafter"/>
</dbReference>
<dbReference type="GO" id="GO:0003729">
    <property type="term" value="F:mRNA binding"/>
    <property type="evidence" value="ECO:0007669"/>
    <property type="project" value="TreeGrafter"/>
</dbReference>
<dbReference type="GO" id="GO:0003743">
    <property type="term" value="F:translation initiation factor activity"/>
    <property type="evidence" value="ECO:0000250"/>
    <property type="project" value="UniProtKB"/>
</dbReference>
<dbReference type="GO" id="GO:0001732">
    <property type="term" value="P:formation of cytoplasmic translation initiation complex"/>
    <property type="evidence" value="ECO:0007669"/>
    <property type="project" value="UniProtKB-UniRule"/>
</dbReference>
<dbReference type="GO" id="GO:0006446">
    <property type="term" value="P:regulation of translational initiation"/>
    <property type="evidence" value="ECO:0000250"/>
    <property type="project" value="UniProtKB"/>
</dbReference>
<dbReference type="GO" id="GO:0002188">
    <property type="term" value="P:translation reinitiation"/>
    <property type="evidence" value="ECO:0007669"/>
    <property type="project" value="TreeGrafter"/>
</dbReference>
<dbReference type="FunFam" id="1.25.40.860:FF:000007">
    <property type="entry name" value="Eukaryotic translation initiation factor 3 subunit A"/>
    <property type="match status" value="1"/>
</dbReference>
<dbReference type="FunFam" id="4.10.860.10:FF:000001">
    <property type="entry name" value="Eukaryotic translation initiation factor 3 subunit A"/>
    <property type="match status" value="1"/>
</dbReference>
<dbReference type="Gene3D" id="1.25.40.860">
    <property type="match status" value="2"/>
</dbReference>
<dbReference type="Gene3D" id="4.10.860.10">
    <property type="entry name" value="UVR domain"/>
    <property type="match status" value="1"/>
</dbReference>
<dbReference type="HAMAP" id="MF_03000">
    <property type="entry name" value="eIF3a"/>
    <property type="match status" value="1"/>
</dbReference>
<dbReference type="InterPro" id="IPR027512">
    <property type="entry name" value="EIF3A"/>
</dbReference>
<dbReference type="InterPro" id="IPR054711">
    <property type="entry name" value="eIF3a_PCI_TPR-like"/>
</dbReference>
<dbReference type="InterPro" id="IPR000717">
    <property type="entry name" value="PCI_dom"/>
</dbReference>
<dbReference type="PANTHER" id="PTHR14005:SF0">
    <property type="entry name" value="EUKARYOTIC TRANSLATION INITIATION FACTOR 3 SUBUNIT A"/>
    <property type="match status" value="1"/>
</dbReference>
<dbReference type="PANTHER" id="PTHR14005">
    <property type="entry name" value="EUKARYOTIC TRANSLATION INITIATION FACTOR 3, THETA SUBUNIT"/>
    <property type="match status" value="1"/>
</dbReference>
<dbReference type="Pfam" id="PF22591">
    <property type="entry name" value="eIF3a_PCI_TPR-like"/>
    <property type="match status" value="1"/>
</dbReference>
<dbReference type="Pfam" id="PF01399">
    <property type="entry name" value="PCI"/>
    <property type="match status" value="1"/>
</dbReference>
<dbReference type="SMART" id="SM00088">
    <property type="entry name" value="PINT"/>
    <property type="match status" value="1"/>
</dbReference>
<dbReference type="PROSITE" id="PS50250">
    <property type="entry name" value="PCI"/>
    <property type="match status" value="1"/>
</dbReference>
<protein>
    <recommendedName>
        <fullName evidence="1">Eukaryotic translation initiation factor 3 subunit A</fullName>
        <shortName evidence="1">eIF3a</shortName>
    </recommendedName>
    <alternativeName>
        <fullName evidence="1">Eukaryotic translation initiation factor 3 subunit 10</fullName>
    </alternativeName>
</protein>
<comment type="function">
    <text evidence="1">RNA-binding component of the eukaryotic translation initiation factor 3 (eIF-3) complex, which is involved in protein synthesis of a specialized repertoire of mRNAs and, together with other initiation factors, stimulates binding of mRNA and methionyl-tRNAi to the 40S ribosome. The eIF-3 complex specifically targets and initiates translation of a subset of mRNAs involved in cell proliferation.</text>
</comment>
<comment type="subunit">
    <text evidence="1">Component of the eukaryotic translation initiation factor 3 (eIF-3) complex. The eIF-3 complex interacts with pix.</text>
</comment>
<comment type="subcellular location">
    <subcellularLocation>
        <location evidence="1">Cytoplasm</location>
    </subcellularLocation>
</comment>
<comment type="similarity">
    <text evidence="1">Belongs to the eIF-3 subunit A family.</text>
</comment>
<reference key="1">
    <citation type="journal article" date="2007" name="Nature">
        <title>Evolution of genes and genomes on the Drosophila phylogeny.</title>
        <authorList>
            <consortium name="Drosophila 12 genomes consortium"/>
        </authorList>
    </citation>
    <scope>NUCLEOTIDE SEQUENCE [LARGE SCALE GENOMIC DNA]</scope>
    <source>
        <strain>Tucson 15010-1051.87</strain>
    </source>
</reference>
<name>EIF3A_DROVI</name>